<proteinExistence type="inferred from homology"/>
<sequence length="353" mass="37508">MSTPMDIKNALNRVVNQLDLTTEEMSDVMREIMTGQCTEAQIGAFLMGMRMKSETIDEIVGAVSVMRELAGKVELKTLDGVVDIVGTGGDGANIFNVSTASAFVIAAAGCTVAKHGNRAVSGKSGSADLLEAAGVYLNLTPVQVARCIDSVGIGFMFAQSHHTAMKHTAGPRRELGLRTLFNMLGPLTNPAGVRHQIVGVFNQALCRPLAEVLLRLGSKHVLVVHSQDGLDEFSLAAPTFVAELKNGEVTEYWVQPEDLGIKSQSLYGLAVESPAASLELIRDALGRRKTENGQKAAEMIVLNAGAALYAADHATSLKEGVALAHDALHTGLAREKLEELGAFTAVFKQENEA</sequence>
<gene>
    <name evidence="1" type="primary">trpD</name>
    <name type="ordered locus">Psyr_4580</name>
</gene>
<accession>Q4ZML2</accession>
<protein>
    <recommendedName>
        <fullName evidence="1">Anthranilate phosphoribosyltransferase</fullName>
        <ecNumber evidence="1">2.4.2.18</ecNumber>
    </recommendedName>
</protein>
<reference key="1">
    <citation type="journal article" date="2005" name="Proc. Natl. Acad. Sci. U.S.A.">
        <title>Comparison of the complete genome sequences of Pseudomonas syringae pv. syringae B728a and pv. tomato DC3000.</title>
        <authorList>
            <person name="Feil H."/>
            <person name="Feil W.S."/>
            <person name="Chain P."/>
            <person name="Larimer F."/>
            <person name="Dibartolo G."/>
            <person name="Copeland A."/>
            <person name="Lykidis A."/>
            <person name="Trong S."/>
            <person name="Nolan M."/>
            <person name="Goltsman E."/>
            <person name="Thiel J."/>
            <person name="Malfatti S."/>
            <person name="Loper J.E."/>
            <person name="Lapidus A."/>
            <person name="Detter J.C."/>
            <person name="Land M."/>
            <person name="Richardson P.M."/>
            <person name="Kyrpides N.C."/>
            <person name="Ivanova N."/>
            <person name="Lindow S.E."/>
        </authorList>
    </citation>
    <scope>NUCLEOTIDE SEQUENCE [LARGE SCALE GENOMIC DNA]</scope>
    <source>
        <strain>B728a</strain>
    </source>
</reference>
<comment type="function">
    <text evidence="1">Catalyzes the transfer of the phosphoribosyl group of 5-phosphorylribose-1-pyrophosphate (PRPP) to anthranilate to yield N-(5'-phosphoribosyl)-anthranilate (PRA).</text>
</comment>
<comment type="catalytic activity">
    <reaction evidence="1">
        <text>N-(5-phospho-beta-D-ribosyl)anthranilate + diphosphate = 5-phospho-alpha-D-ribose 1-diphosphate + anthranilate</text>
        <dbReference type="Rhea" id="RHEA:11768"/>
        <dbReference type="ChEBI" id="CHEBI:16567"/>
        <dbReference type="ChEBI" id="CHEBI:18277"/>
        <dbReference type="ChEBI" id="CHEBI:33019"/>
        <dbReference type="ChEBI" id="CHEBI:58017"/>
        <dbReference type="EC" id="2.4.2.18"/>
    </reaction>
</comment>
<comment type="cofactor">
    <cofactor evidence="1">
        <name>Mg(2+)</name>
        <dbReference type="ChEBI" id="CHEBI:18420"/>
    </cofactor>
    <text evidence="1">Binds 2 magnesium ions per monomer.</text>
</comment>
<comment type="pathway">
    <text evidence="1">Amino-acid biosynthesis; L-tryptophan biosynthesis; L-tryptophan from chorismate: step 2/5.</text>
</comment>
<comment type="subunit">
    <text evidence="1">Homodimer.</text>
</comment>
<comment type="similarity">
    <text evidence="1">Belongs to the anthranilate phosphoribosyltransferase family.</text>
</comment>
<evidence type="ECO:0000255" key="1">
    <source>
        <dbReference type="HAMAP-Rule" id="MF_00211"/>
    </source>
</evidence>
<keyword id="KW-0028">Amino-acid biosynthesis</keyword>
<keyword id="KW-0057">Aromatic amino acid biosynthesis</keyword>
<keyword id="KW-0328">Glycosyltransferase</keyword>
<keyword id="KW-0460">Magnesium</keyword>
<keyword id="KW-0479">Metal-binding</keyword>
<keyword id="KW-0808">Transferase</keyword>
<keyword id="KW-0822">Tryptophan biosynthesis</keyword>
<feature type="chain" id="PRO_0000227186" description="Anthranilate phosphoribosyltransferase">
    <location>
        <begin position="1"/>
        <end position="353"/>
    </location>
</feature>
<feature type="binding site" evidence="1">
    <location>
        <position position="86"/>
    </location>
    <ligand>
        <name>5-phospho-alpha-D-ribose 1-diphosphate</name>
        <dbReference type="ChEBI" id="CHEBI:58017"/>
    </ligand>
</feature>
<feature type="binding site" evidence="1">
    <location>
        <position position="86"/>
    </location>
    <ligand>
        <name>anthranilate</name>
        <dbReference type="ChEBI" id="CHEBI:16567"/>
        <label>1</label>
    </ligand>
</feature>
<feature type="binding site" evidence="1">
    <location>
        <begin position="89"/>
        <end position="90"/>
    </location>
    <ligand>
        <name>5-phospho-alpha-D-ribose 1-diphosphate</name>
        <dbReference type="ChEBI" id="CHEBI:58017"/>
    </ligand>
</feature>
<feature type="binding site" evidence="1">
    <location>
        <begin position="96"/>
        <end position="99"/>
    </location>
    <ligand>
        <name>5-phospho-alpha-D-ribose 1-diphosphate</name>
        <dbReference type="ChEBI" id="CHEBI:58017"/>
    </ligand>
</feature>
<feature type="binding site" evidence="1">
    <location>
        <position position="98"/>
    </location>
    <ligand>
        <name>Mg(2+)</name>
        <dbReference type="ChEBI" id="CHEBI:18420"/>
        <label>1</label>
    </ligand>
</feature>
<feature type="binding site" evidence="1">
    <location>
        <begin position="114"/>
        <end position="122"/>
    </location>
    <ligand>
        <name>5-phospho-alpha-D-ribose 1-diphosphate</name>
        <dbReference type="ChEBI" id="CHEBI:58017"/>
    </ligand>
</feature>
<feature type="binding site" evidence="1">
    <location>
        <position position="117"/>
    </location>
    <ligand>
        <name>anthranilate</name>
        <dbReference type="ChEBI" id="CHEBI:16567"/>
        <label>1</label>
    </ligand>
</feature>
<feature type="binding site" evidence="1">
    <location>
        <position position="126"/>
    </location>
    <ligand>
        <name>5-phospho-alpha-D-ribose 1-diphosphate</name>
        <dbReference type="ChEBI" id="CHEBI:58017"/>
    </ligand>
</feature>
<feature type="binding site" evidence="1">
    <location>
        <position position="172"/>
    </location>
    <ligand>
        <name>anthranilate</name>
        <dbReference type="ChEBI" id="CHEBI:16567"/>
        <label>2</label>
    </ligand>
</feature>
<feature type="binding site" evidence="1">
    <location>
        <position position="231"/>
    </location>
    <ligand>
        <name>Mg(2+)</name>
        <dbReference type="ChEBI" id="CHEBI:18420"/>
        <label>2</label>
    </ligand>
</feature>
<feature type="binding site" evidence="1">
    <location>
        <position position="232"/>
    </location>
    <ligand>
        <name>Mg(2+)</name>
        <dbReference type="ChEBI" id="CHEBI:18420"/>
        <label>1</label>
    </ligand>
</feature>
<feature type="binding site" evidence="1">
    <location>
        <position position="232"/>
    </location>
    <ligand>
        <name>Mg(2+)</name>
        <dbReference type="ChEBI" id="CHEBI:18420"/>
        <label>2</label>
    </ligand>
</feature>
<name>TRPD_PSEU2</name>
<organism>
    <name type="scientific">Pseudomonas syringae pv. syringae (strain B728a)</name>
    <dbReference type="NCBI Taxonomy" id="205918"/>
    <lineage>
        <taxon>Bacteria</taxon>
        <taxon>Pseudomonadati</taxon>
        <taxon>Pseudomonadota</taxon>
        <taxon>Gammaproteobacteria</taxon>
        <taxon>Pseudomonadales</taxon>
        <taxon>Pseudomonadaceae</taxon>
        <taxon>Pseudomonas</taxon>
        <taxon>Pseudomonas syringae</taxon>
    </lineage>
</organism>
<dbReference type="EC" id="2.4.2.18" evidence="1"/>
<dbReference type="EMBL" id="CP000075">
    <property type="protein sequence ID" value="AAY39610.1"/>
    <property type="molecule type" value="Genomic_DNA"/>
</dbReference>
<dbReference type="RefSeq" id="YP_237648.1">
    <property type="nucleotide sequence ID" value="NC_007005.1"/>
</dbReference>
<dbReference type="SMR" id="Q4ZML2"/>
<dbReference type="STRING" id="205918.Psyr_4580"/>
<dbReference type="KEGG" id="psb:Psyr_4580"/>
<dbReference type="PATRIC" id="fig|205918.7.peg.4719"/>
<dbReference type="eggNOG" id="COG0547">
    <property type="taxonomic scope" value="Bacteria"/>
</dbReference>
<dbReference type="HOGENOM" id="CLU_034315_2_1_6"/>
<dbReference type="OrthoDB" id="9806430at2"/>
<dbReference type="UniPathway" id="UPA00035">
    <property type="reaction ID" value="UER00041"/>
</dbReference>
<dbReference type="Proteomes" id="UP000000426">
    <property type="component" value="Chromosome"/>
</dbReference>
<dbReference type="GO" id="GO:0005829">
    <property type="term" value="C:cytosol"/>
    <property type="evidence" value="ECO:0007669"/>
    <property type="project" value="TreeGrafter"/>
</dbReference>
<dbReference type="GO" id="GO:0004048">
    <property type="term" value="F:anthranilate phosphoribosyltransferase activity"/>
    <property type="evidence" value="ECO:0007669"/>
    <property type="project" value="UniProtKB-UniRule"/>
</dbReference>
<dbReference type="GO" id="GO:0000287">
    <property type="term" value="F:magnesium ion binding"/>
    <property type="evidence" value="ECO:0007669"/>
    <property type="project" value="UniProtKB-UniRule"/>
</dbReference>
<dbReference type="GO" id="GO:0000162">
    <property type="term" value="P:L-tryptophan biosynthetic process"/>
    <property type="evidence" value="ECO:0007669"/>
    <property type="project" value="UniProtKB-UniRule"/>
</dbReference>
<dbReference type="FunFam" id="1.20.970.10:FF:000006">
    <property type="entry name" value="Anthranilate phosphoribosyltransferase"/>
    <property type="match status" value="1"/>
</dbReference>
<dbReference type="FunFam" id="3.40.1030.10:FF:000002">
    <property type="entry name" value="Anthranilate phosphoribosyltransferase"/>
    <property type="match status" value="1"/>
</dbReference>
<dbReference type="Gene3D" id="3.40.1030.10">
    <property type="entry name" value="Nucleoside phosphorylase/phosphoribosyltransferase catalytic domain"/>
    <property type="match status" value="1"/>
</dbReference>
<dbReference type="Gene3D" id="1.20.970.10">
    <property type="entry name" value="Transferase, Pyrimidine Nucleoside Phosphorylase, Chain C"/>
    <property type="match status" value="1"/>
</dbReference>
<dbReference type="HAMAP" id="MF_00211">
    <property type="entry name" value="TrpD"/>
    <property type="match status" value="1"/>
</dbReference>
<dbReference type="InterPro" id="IPR005940">
    <property type="entry name" value="Anthranilate_Pribosyl_Tfrase"/>
</dbReference>
<dbReference type="InterPro" id="IPR000312">
    <property type="entry name" value="Glycosyl_Trfase_fam3"/>
</dbReference>
<dbReference type="InterPro" id="IPR017459">
    <property type="entry name" value="Glycosyl_Trfase_fam3_N_dom"/>
</dbReference>
<dbReference type="InterPro" id="IPR036320">
    <property type="entry name" value="Glycosyl_Trfase_fam3_N_dom_sf"/>
</dbReference>
<dbReference type="InterPro" id="IPR035902">
    <property type="entry name" value="Nuc_phospho_transferase"/>
</dbReference>
<dbReference type="NCBIfam" id="TIGR01245">
    <property type="entry name" value="trpD"/>
    <property type="match status" value="1"/>
</dbReference>
<dbReference type="PANTHER" id="PTHR43285">
    <property type="entry name" value="ANTHRANILATE PHOSPHORIBOSYLTRANSFERASE"/>
    <property type="match status" value="1"/>
</dbReference>
<dbReference type="PANTHER" id="PTHR43285:SF2">
    <property type="entry name" value="ANTHRANILATE PHOSPHORIBOSYLTRANSFERASE"/>
    <property type="match status" value="1"/>
</dbReference>
<dbReference type="Pfam" id="PF02885">
    <property type="entry name" value="Glycos_trans_3N"/>
    <property type="match status" value="1"/>
</dbReference>
<dbReference type="Pfam" id="PF00591">
    <property type="entry name" value="Glycos_transf_3"/>
    <property type="match status" value="1"/>
</dbReference>
<dbReference type="SUPFAM" id="SSF52418">
    <property type="entry name" value="Nucleoside phosphorylase/phosphoribosyltransferase catalytic domain"/>
    <property type="match status" value="1"/>
</dbReference>
<dbReference type="SUPFAM" id="SSF47648">
    <property type="entry name" value="Nucleoside phosphorylase/phosphoribosyltransferase N-terminal domain"/>
    <property type="match status" value="1"/>
</dbReference>